<organism>
    <name type="scientific">Buchnera aphidicola subsp. Acyrthosiphon pisum (strain 5A)</name>
    <dbReference type="NCBI Taxonomy" id="563178"/>
    <lineage>
        <taxon>Bacteria</taxon>
        <taxon>Pseudomonadati</taxon>
        <taxon>Pseudomonadota</taxon>
        <taxon>Gammaproteobacteria</taxon>
        <taxon>Enterobacterales</taxon>
        <taxon>Erwiniaceae</taxon>
        <taxon>Buchnera</taxon>
    </lineage>
</organism>
<evidence type="ECO:0000255" key="1">
    <source>
        <dbReference type="HAMAP-Rule" id="MF_00478"/>
    </source>
</evidence>
<reference key="1">
    <citation type="journal article" date="2009" name="Science">
        <title>The dynamics and time scale of ongoing genomic erosion in symbiotic bacteria.</title>
        <authorList>
            <person name="Moran N.A."/>
            <person name="McLaughlin H.J."/>
            <person name="Sorek R."/>
        </authorList>
    </citation>
    <scope>NUCLEOTIDE SEQUENCE [LARGE SCALE GENOMIC DNA]</scope>
    <source>
        <strain>5A</strain>
    </source>
</reference>
<feature type="chain" id="PRO_1000135555" description="Ion-translocating oxidoreductase complex subunit E">
    <location>
        <begin position="1"/>
        <end position="227"/>
    </location>
</feature>
<feature type="transmembrane region" description="Helical" evidence="1">
    <location>
        <begin position="34"/>
        <end position="56"/>
    </location>
</feature>
<feature type="transmembrane region" description="Helical" evidence="1">
    <location>
        <begin position="68"/>
        <end position="88"/>
    </location>
</feature>
<feature type="transmembrane region" description="Helical" evidence="1">
    <location>
        <begin position="91"/>
        <end position="111"/>
    </location>
</feature>
<feature type="transmembrane region" description="Helical" evidence="1">
    <location>
        <begin position="127"/>
        <end position="147"/>
    </location>
</feature>
<feature type="transmembrane region" description="Helical" evidence="1">
    <location>
        <begin position="181"/>
        <end position="201"/>
    </location>
</feature>
<proteinExistence type="inferred from homology"/>
<accession>B8D8R9</accession>
<dbReference type="EC" id="7.-.-.-" evidence="1"/>
<dbReference type="EMBL" id="CP001161">
    <property type="protein sequence ID" value="ACL30491.1"/>
    <property type="molecule type" value="Genomic_DNA"/>
</dbReference>
<dbReference type="RefSeq" id="WP_009874074.1">
    <property type="nucleotide sequence ID" value="NC_011833.1"/>
</dbReference>
<dbReference type="SMR" id="B8D8R9"/>
<dbReference type="KEGG" id="bap:BUAP5A_116"/>
<dbReference type="HOGENOM" id="CLU_046659_1_0_6"/>
<dbReference type="OrthoDB" id="9803631at2"/>
<dbReference type="Proteomes" id="UP000006904">
    <property type="component" value="Chromosome"/>
</dbReference>
<dbReference type="GO" id="GO:0005886">
    <property type="term" value="C:plasma membrane"/>
    <property type="evidence" value="ECO:0007669"/>
    <property type="project" value="UniProtKB-SubCell"/>
</dbReference>
<dbReference type="GO" id="GO:0022900">
    <property type="term" value="P:electron transport chain"/>
    <property type="evidence" value="ECO:0007669"/>
    <property type="project" value="UniProtKB-UniRule"/>
</dbReference>
<dbReference type="HAMAP" id="MF_00478">
    <property type="entry name" value="RsxE_RnfE"/>
    <property type="match status" value="1"/>
</dbReference>
<dbReference type="InterPro" id="IPR003667">
    <property type="entry name" value="NqrDE/RnfAE"/>
</dbReference>
<dbReference type="InterPro" id="IPR010968">
    <property type="entry name" value="RnfE"/>
</dbReference>
<dbReference type="NCBIfam" id="NF009070">
    <property type="entry name" value="PRK12405.1"/>
    <property type="match status" value="1"/>
</dbReference>
<dbReference type="NCBIfam" id="TIGR01948">
    <property type="entry name" value="rnfE"/>
    <property type="match status" value="1"/>
</dbReference>
<dbReference type="PANTHER" id="PTHR30586">
    <property type="entry name" value="ELECTRON TRANSPORT COMPLEX PROTEIN RNFE"/>
    <property type="match status" value="1"/>
</dbReference>
<dbReference type="PANTHER" id="PTHR30586:SF0">
    <property type="entry name" value="ION-TRANSLOCATING OXIDOREDUCTASE COMPLEX SUBUNIT E"/>
    <property type="match status" value="1"/>
</dbReference>
<dbReference type="Pfam" id="PF02508">
    <property type="entry name" value="Rnf-Nqr"/>
    <property type="match status" value="1"/>
</dbReference>
<dbReference type="PIRSF" id="PIRSF006102">
    <property type="entry name" value="NQR_DE"/>
    <property type="match status" value="1"/>
</dbReference>
<sequence length="227" mass="25198">MNIKNFLNNRLWKNNSSLVQLLGLCPVLAMTTNAINAIGLGMTTTLVLTITNTIISSFRKIIPKDLRIPIYMMIISSVVTSIEMLLHAYTFNLYQSLGIFIPLIVTNCIIVGRADLIAYKSSIVESFFDGIFIGLGSMFAMFAVGSIREILGNGTLFFGANKIISNIHSSVFFTLLDKKFTIILAVFPPGGFLILGFLIAIKNFIDLYYKKNTIKNIEQCSCSNKIK</sequence>
<name>RNFE_BUCA5</name>
<gene>
    <name evidence="1" type="primary">rnfE</name>
    <name type="ordered locus">BUAP5A_116</name>
</gene>
<protein>
    <recommendedName>
        <fullName evidence="1">Ion-translocating oxidoreductase complex subunit E</fullName>
        <ecNumber evidence="1">7.-.-.-</ecNumber>
    </recommendedName>
    <alternativeName>
        <fullName evidence="1">Rnf electron transport complex subunit E</fullName>
    </alternativeName>
</protein>
<comment type="function">
    <text evidence="1">Part of a membrane-bound complex that couples electron transfer with translocation of ions across the membrane.</text>
</comment>
<comment type="subunit">
    <text evidence="1">The complex is composed of six subunits: RnfA, RnfB, RnfC, RnfD, RnfE and RnfG.</text>
</comment>
<comment type="subcellular location">
    <subcellularLocation>
        <location evidence="1">Cell inner membrane</location>
        <topology evidence="1">Multi-pass membrane protein</topology>
    </subcellularLocation>
</comment>
<comment type="similarity">
    <text evidence="1">Belongs to the NqrDE/RnfAE family.</text>
</comment>
<keyword id="KW-0997">Cell inner membrane</keyword>
<keyword id="KW-1003">Cell membrane</keyword>
<keyword id="KW-0249">Electron transport</keyword>
<keyword id="KW-0472">Membrane</keyword>
<keyword id="KW-1278">Translocase</keyword>
<keyword id="KW-0812">Transmembrane</keyword>
<keyword id="KW-1133">Transmembrane helix</keyword>
<keyword id="KW-0813">Transport</keyword>